<name>SMTB_MYCTO</name>
<feature type="chain" id="PRO_0000427298" description="HTH-type transcriptional repressor SmtB">
    <location>
        <begin position="1"/>
        <end position="135"/>
    </location>
</feature>
<feature type="domain" description="HTH arsR-type" evidence="2">
    <location>
        <begin position="40"/>
        <end position="134"/>
    </location>
</feature>
<feature type="DNA-binding region" description="H-T-H motif" evidence="2">
    <location>
        <begin position="74"/>
        <end position="97"/>
    </location>
</feature>
<feature type="region of interest" description="Disordered" evidence="3">
    <location>
        <begin position="1"/>
        <end position="32"/>
    </location>
</feature>
<feature type="compositionally biased region" description="Basic and acidic residues" evidence="3">
    <location>
        <begin position="11"/>
        <end position="31"/>
    </location>
</feature>
<feature type="binding site" evidence="2">
    <location>
        <position position="116"/>
    </location>
    <ligand>
        <name>Zn(2+)</name>
        <dbReference type="ChEBI" id="CHEBI:29105"/>
        <label>1</label>
    </ligand>
</feature>
<feature type="binding site" evidence="2">
    <location>
        <position position="118"/>
    </location>
    <ligand>
        <name>Zn(2+)</name>
        <dbReference type="ChEBI" id="CHEBI:29105"/>
        <label>1</label>
    </ligand>
</feature>
<feature type="binding site" evidence="2">
    <location>
        <position position="129"/>
    </location>
    <ligand>
        <name>Zn(2+)</name>
        <dbReference type="ChEBI" id="CHEBI:29105"/>
        <label>2</label>
    </ligand>
</feature>
<feature type="binding site" evidence="2">
    <location>
        <position position="132"/>
    </location>
    <ligand>
        <name>Zn(2+)</name>
        <dbReference type="ChEBI" id="CHEBI:29105"/>
        <label>2</label>
    </ligand>
</feature>
<reference key="1">
    <citation type="journal article" date="2002" name="J. Bacteriol.">
        <title>Whole-genome comparison of Mycobacterium tuberculosis clinical and laboratory strains.</title>
        <authorList>
            <person name="Fleischmann R.D."/>
            <person name="Alland D."/>
            <person name="Eisen J.A."/>
            <person name="Carpenter L."/>
            <person name="White O."/>
            <person name="Peterson J.D."/>
            <person name="DeBoy R.T."/>
            <person name="Dodson R.J."/>
            <person name="Gwinn M.L."/>
            <person name="Haft D.H."/>
            <person name="Hickey E.K."/>
            <person name="Kolonay J.F."/>
            <person name="Nelson W.C."/>
            <person name="Umayam L.A."/>
            <person name="Ermolaeva M.D."/>
            <person name="Salzberg S.L."/>
            <person name="Delcher A."/>
            <person name="Utterback T.R."/>
            <person name="Weidman J.F."/>
            <person name="Khouri H.M."/>
            <person name="Gill J."/>
            <person name="Mikula A."/>
            <person name="Bishai W."/>
            <person name="Jacobs W.R. Jr."/>
            <person name="Venter J.C."/>
            <person name="Fraser C.M."/>
        </authorList>
    </citation>
    <scope>NUCLEOTIDE SEQUENCE [LARGE SCALE GENOMIC DNA]</scope>
    <source>
        <strain>CDC 1551 / Oshkosh</strain>
    </source>
</reference>
<proteinExistence type="inferred from homology"/>
<comment type="function">
    <text evidence="1">Transcriptional regulator involved in zinc homeostasis. Represses the expression of the smtB-zur operon in the absence of zinc. Could act as the metal sensor that controls the expression of zur in response to zinc availability (By similarity).</text>
</comment>
<comment type="activity regulation">
    <text evidence="1">Binding to DNA is inhibited by zinc ions.</text>
</comment>
<comment type="subunit">
    <text evidence="1">Homodimer.</text>
</comment>
<gene>
    <name type="primary">smtB</name>
    <name type="ordered locus">MT2427</name>
</gene>
<dbReference type="EMBL" id="AE000516">
    <property type="protein sequence ID" value="AAK46721.1"/>
    <property type="molecule type" value="Genomic_DNA"/>
</dbReference>
<dbReference type="PIR" id="E70585">
    <property type="entry name" value="E70585"/>
</dbReference>
<dbReference type="RefSeq" id="WP_003412205.1">
    <property type="nucleotide sequence ID" value="NZ_KK341227.1"/>
</dbReference>
<dbReference type="SMR" id="P9WMI4"/>
<dbReference type="KEGG" id="mtc:MT2427"/>
<dbReference type="PATRIC" id="fig|83331.31.peg.2615"/>
<dbReference type="HOGENOM" id="CLU_097806_7_6_11"/>
<dbReference type="Proteomes" id="UP000001020">
    <property type="component" value="Chromosome"/>
</dbReference>
<dbReference type="GO" id="GO:0003677">
    <property type="term" value="F:DNA binding"/>
    <property type="evidence" value="ECO:0007669"/>
    <property type="project" value="UniProtKB-KW"/>
</dbReference>
<dbReference type="GO" id="GO:0003700">
    <property type="term" value="F:DNA-binding transcription factor activity"/>
    <property type="evidence" value="ECO:0007669"/>
    <property type="project" value="InterPro"/>
</dbReference>
<dbReference type="GO" id="GO:0046872">
    <property type="term" value="F:metal ion binding"/>
    <property type="evidence" value="ECO:0007669"/>
    <property type="project" value="UniProtKB-KW"/>
</dbReference>
<dbReference type="CDD" id="cd00090">
    <property type="entry name" value="HTH_ARSR"/>
    <property type="match status" value="1"/>
</dbReference>
<dbReference type="FunFam" id="1.10.10.10:FF:000484">
    <property type="entry name" value="ArsR family transcriptional regulator"/>
    <property type="match status" value="1"/>
</dbReference>
<dbReference type="Gene3D" id="1.10.10.10">
    <property type="entry name" value="Winged helix-like DNA-binding domain superfamily/Winged helix DNA-binding domain"/>
    <property type="match status" value="1"/>
</dbReference>
<dbReference type="InterPro" id="IPR011991">
    <property type="entry name" value="ArsR-like_HTH"/>
</dbReference>
<dbReference type="InterPro" id="IPR001845">
    <property type="entry name" value="HTH_ArsR_DNA-bd_dom"/>
</dbReference>
<dbReference type="InterPro" id="IPR051011">
    <property type="entry name" value="Metal_resp_trans_reg"/>
</dbReference>
<dbReference type="InterPro" id="IPR036388">
    <property type="entry name" value="WH-like_DNA-bd_sf"/>
</dbReference>
<dbReference type="InterPro" id="IPR036390">
    <property type="entry name" value="WH_DNA-bd_sf"/>
</dbReference>
<dbReference type="NCBIfam" id="NF033788">
    <property type="entry name" value="HTH_metalloreg"/>
    <property type="match status" value="1"/>
</dbReference>
<dbReference type="PANTHER" id="PTHR43132">
    <property type="entry name" value="ARSENICAL RESISTANCE OPERON REPRESSOR ARSR-RELATED"/>
    <property type="match status" value="1"/>
</dbReference>
<dbReference type="PANTHER" id="PTHR43132:SF2">
    <property type="entry name" value="ARSENICAL RESISTANCE OPERON REPRESSOR ARSR-RELATED"/>
    <property type="match status" value="1"/>
</dbReference>
<dbReference type="Pfam" id="PF01022">
    <property type="entry name" value="HTH_5"/>
    <property type="match status" value="1"/>
</dbReference>
<dbReference type="PRINTS" id="PR00778">
    <property type="entry name" value="HTHARSR"/>
</dbReference>
<dbReference type="SMART" id="SM00418">
    <property type="entry name" value="HTH_ARSR"/>
    <property type="match status" value="1"/>
</dbReference>
<dbReference type="SUPFAM" id="SSF46785">
    <property type="entry name" value="Winged helix' DNA-binding domain"/>
    <property type="match status" value="1"/>
</dbReference>
<dbReference type="PROSITE" id="PS50987">
    <property type="entry name" value="HTH_ARSR_2"/>
    <property type="match status" value="1"/>
</dbReference>
<keyword id="KW-0238">DNA-binding</keyword>
<keyword id="KW-0479">Metal-binding</keyword>
<keyword id="KW-1185">Reference proteome</keyword>
<keyword id="KW-0678">Repressor</keyword>
<keyword id="KW-0804">Transcription</keyword>
<keyword id="KW-0805">Transcription regulation</keyword>
<keyword id="KW-0862">Zinc</keyword>
<protein>
    <recommendedName>
        <fullName>HTH-type transcriptional repressor SmtB</fullName>
    </recommendedName>
</protein>
<organism>
    <name type="scientific">Mycobacterium tuberculosis (strain CDC 1551 / Oshkosh)</name>
    <dbReference type="NCBI Taxonomy" id="83331"/>
    <lineage>
        <taxon>Bacteria</taxon>
        <taxon>Bacillati</taxon>
        <taxon>Actinomycetota</taxon>
        <taxon>Actinomycetes</taxon>
        <taxon>Mycobacteriales</taxon>
        <taxon>Mycobacteriaceae</taxon>
        <taxon>Mycobacterium</taxon>
        <taxon>Mycobacterium tuberculosis complex</taxon>
    </lineage>
</organism>
<accession>P9WMI4</accession>
<accession>F2GIN4</accession>
<accession>L0TCA4</accession>
<accession>O05840</accession>
<accession>Q7D7A0</accession>
<sequence>MVTSPSTPTAAHEDVGADEVGGHQHPADRFAECPTFPAPPPREILDAAGELLRALAAPVRIAIVLQLRESQRCVHELVDALHVPQPLVSQHLKILKAAGVVTGERSGREVLYRLADHHLAHIVLDAVAHAGEDAI</sequence>
<evidence type="ECO:0000250" key="1"/>
<evidence type="ECO:0000255" key="2">
    <source>
        <dbReference type="PROSITE-ProRule" id="PRU00340"/>
    </source>
</evidence>
<evidence type="ECO:0000256" key="3">
    <source>
        <dbReference type="SAM" id="MobiDB-lite"/>
    </source>
</evidence>